<gene>
    <name type="primary">PPC6-7</name>
    <name type="ordered locus">At5g27930</name>
    <name type="ORF">F14I23.90</name>
    <name type="ORF">F15F15.3</name>
</gene>
<name>P2C73_ARATH</name>
<reference key="1">
    <citation type="journal article" date="2000" name="Nature">
        <title>Sequence and analysis of chromosome 5 of the plant Arabidopsis thaliana.</title>
        <authorList>
            <person name="Tabata S."/>
            <person name="Kaneko T."/>
            <person name="Nakamura Y."/>
            <person name="Kotani H."/>
            <person name="Kato T."/>
            <person name="Asamizu E."/>
            <person name="Miyajima N."/>
            <person name="Sasamoto S."/>
            <person name="Kimura T."/>
            <person name="Hosouchi T."/>
            <person name="Kawashima K."/>
            <person name="Kohara M."/>
            <person name="Matsumoto M."/>
            <person name="Matsuno A."/>
            <person name="Muraki A."/>
            <person name="Nakayama S."/>
            <person name="Nakazaki N."/>
            <person name="Naruo K."/>
            <person name="Okumura S."/>
            <person name="Shinpo S."/>
            <person name="Takeuchi C."/>
            <person name="Wada T."/>
            <person name="Watanabe A."/>
            <person name="Yamada M."/>
            <person name="Yasuda M."/>
            <person name="Sato S."/>
            <person name="de la Bastide M."/>
            <person name="Huang E."/>
            <person name="Spiegel L."/>
            <person name="Gnoj L."/>
            <person name="O'Shaughnessy A."/>
            <person name="Preston R."/>
            <person name="Habermann K."/>
            <person name="Murray J."/>
            <person name="Johnson D."/>
            <person name="Rohlfing T."/>
            <person name="Nelson J."/>
            <person name="Stoneking T."/>
            <person name="Pepin K."/>
            <person name="Spieth J."/>
            <person name="Sekhon M."/>
            <person name="Armstrong J."/>
            <person name="Becker M."/>
            <person name="Belter E."/>
            <person name="Cordum H."/>
            <person name="Cordes M."/>
            <person name="Courtney L."/>
            <person name="Courtney W."/>
            <person name="Dante M."/>
            <person name="Du H."/>
            <person name="Edwards J."/>
            <person name="Fryman J."/>
            <person name="Haakensen B."/>
            <person name="Lamar E."/>
            <person name="Latreille P."/>
            <person name="Leonard S."/>
            <person name="Meyer R."/>
            <person name="Mulvaney E."/>
            <person name="Ozersky P."/>
            <person name="Riley A."/>
            <person name="Strowmatt C."/>
            <person name="Wagner-McPherson C."/>
            <person name="Wollam A."/>
            <person name="Yoakum M."/>
            <person name="Bell M."/>
            <person name="Dedhia N."/>
            <person name="Parnell L."/>
            <person name="Shah R."/>
            <person name="Rodriguez M."/>
            <person name="Hoon See L."/>
            <person name="Vil D."/>
            <person name="Baker J."/>
            <person name="Kirchoff K."/>
            <person name="Toth K."/>
            <person name="King L."/>
            <person name="Bahret A."/>
            <person name="Miller B."/>
            <person name="Marra M.A."/>
            <person name="Martienssen R."/>
            <person name="McCombie W.R."/>
            <person name="Wilson R.K."/>
            <person name="Murphy G."/>
            <person name="Bancroft I."/>
            <person name="Volckaert G."/>
            <person name="Wambutt R."/>
            <person name="Duesterhoeft A."/>
            <person name="Stiekema W."/>
            <person name="Pohl T."/>
            <person name="Entian K.-D."/>
            <person name="Terryn N."/>
            <person name="Hartley N."/>
            <person name="Bent E."/>
            <person name="Johnson S."/>
            <person name="Langham S.-A."/>
            <person name="McCullagh B."/>
            <person name="Robben J."/>
            <person name="Grymonprez B."/>
            <person name="Zimmermann W."/>
            <person name="Ramsperger U."/>
            <person name="Wedler H."/>
            <person name="Balke K."/>
            <person name="Wedler E."/>
            <person name="Peters S."/>
            <person name="van Staveren M."/>
            <person name="Dirkse W."/>
            <person name="Mooijman P."/>
            <person name="Klein Lankhorst R."/>
            <person name="Weitzenegger T."/>
            <person name="Bothe G."/>
            <person name="Rose M."/>
            <person name="Hauf J."/>
            <person name="Berneiser S."/>
            <person name="Hempel S."/>
            <person name="Feldpausch M."/>
            <person name="Lamberth S."/>
            <person name="Villarroel R."/>
            <person name="Gielen J."/>
            <person name="Ardiles W."/>
            <person name="Bents O."/>
            <person name="Lemcke K."/>
            <person name="Kolesov G."/>
            <person name="Mayer K.F.X."/>
            <person name="Rudd S."/>
            <person name="Schoof H."/>
            <person name="Schueller C."/>
            <person name="Zaccaria P."/>
            <person name="Mewes H.-W."/>
            <person name="Bevan M."/>
            <person name="Fransz P.F."/>
        </authorList>
    </citation>
    <scope>NUCLEOTIDE SEQUENCE [LARGE SCALE GENOMIC DNA]</scope>
    <source>
        <strain>cv. Columbia</strain>
    </source>
</reference>
<reference key="2">
    <citation type="journal article" date="2017" name="Plant J.">
        <title>Araport11: a complete reannotation of the Arabidopsis thaliana reference genome.</title>
        <authorList>
            <person name="Cheng C.Y."/>
            <person name="Krishnakumar V."/>
            <person name="Chan A.P."/>
            <person name="Thibaud-Nissen F."/>
            <person name="Schobel S."/>
            <person name="Town C.D."/>
        </authorList>
    </citation>
    <scope>GENOME REANNOTATION</scope>
    <source>
        <strain>cv. Columbia</strain>
    </source>
</reference>
<reference key="3">
    <citation type="journal article" date="2002" name="Science">
        <title>Functional annotation of a full-length Arabidopsis cDNA collection.</title>
        <authorList>
            <person name="Seki M."/>
            <person name="Narusaka M."/>
            <person name="Kamiya A."/>
            <person name="Ishida J."/>
            <person name="Satou M."/>
            <person name="Sakurai T."/>
            <person name="Nakajima M."/>
            <person name="Enju A."/>
            <person name="Akiyama K."/>
            <person name="Oono Y."/>
            <person name="Muramatsu M."/>
            <person name="Hayashizaki Y."/>
            <person name="Kawai J."/>
            <person name="Carninci P."/>
            <person name="Itoh M."/>
            <person name="Ishii Y."/>
            <person name="Arakawa T."/>
            <person name="Shibata K."/>
            <person name="Shinagawa A."/>
            <person name="Shinozaki K."/>
        </authorList>
    </citation>
    <scope>NUCLEOTIDE SEQUENCE [LARGE SCALE MRNA]</scope>
    <source>
        <strain>cv. Columbia</strain>
    </source>
</reference>
<reference key="4">
    <citation type="submission" date="2006-07" db="EMBL/GenBank/DDBJ databases">
        <title>Large-scale analysis of RIKEN Arabidopsis full-length (RAFL) cDNAs.</title>
        <authorList>
            <person name="Totoki Y."/>
            <person name="Seki M."/>
            <person name="Ishida J."/>
            <person name="Nakajima M."/>
            <person name="Enju A."/>
            <person name="Kamiya A."/>
            <person name="Narusaka M."/>
            <person name="Shin-i T."/>
            <person name="Nakagawa M."/>
            <person name="Sakamoto N."/>
            <person name="Oishi K."/>
            <person name="Kohara Y."/>
            <person name="Kobayashi M."/>
            <person name="Toyoda A."/>
            <person name="Sakaki Y."/>
            <person name="Sakurai T."/>
            <person name="Iida K."/>
            <person name="Akiyama K."/>
            <person name="Satou M."/>
            <person name="Toyoda T."/>
            <person name="Konagaya A."/>
            <person name="Carninci P."/>
            <person name="Kawai J."/>
            <person name="Hayashizaki Y."/>
            <person name="Shinozaki K."/>
        </authorList>
    </citation>
    <scope>NUCLEOTIDE SEQUENCE [LARGE SCALE MRNA]</scope>
    <source>
        <strain>cv. Columbia</strain>
    </source>
</reference>
<reference key="5">
    <citation type="submission" date="2006-08" db="EMBL/GenBank/DDBJ databases">
        <title>Arabidopsis ORF Clones.</title>
        <authorList>
            <person name="Quinitio C."/>
            <person name="Chen H."/>
            <person name="Kim C.J."/>
            <person name="Shinn P."/>
            <person name="Ecker J.R."/>
        </authorList>
    </citation>
    <scope>NUCLEOTIDE SEQUENCE [LARGE SCALE MRNA]</scope>
    <source>
        <strain>cv. Columbia</strain>
    </source>
</reference>
<reference key="6">
    <citation type="submission" date="2002-03" db="EMBL/GenBank/DDBJ databases">
        <title>Full-length cDNA from Arabidopsis thaliana.</title>
        <authorList>
            <person name="Brover V.V."/>
            <person name="Troukhan M.E."/>
            <person name="Alexandrov N.A."/>
            <person name="Lu Y.-P."/>
            <person name="Flavell R.B."/>
            <person name="Feldmann K.A."/>
        </authorList>
    </citation>
    <scope>NUCLEOTIDE SEQUENCE [LARGE SCALE MRNA]</scope>
</reference>
<reference key="7">
    <citation type="submission" date="2002-02" db="EMBL/GenBank/DDBJ databases">
        <title>Substrate specificity of type 2C protein phosphatases (PP2C) in Arabidopsis thaliana.</title>
        <authorList>
            <person name="Izumi S."/>
            <person name="Yamada M."/>
            <person name="Ohsato H."/>
            <person name="Miyazaki S."/>
            <person name="Bohnert H.J."/>
            <person name="Fukuhara T."/>
        </authorList>
    </citation>
    <scope>NUCLEOTIDE SEQUENCE [MRNA] OF 37-373</scope>
</reference>
<reference key="8">
    <citation type="journal article" date="2008" name="BMC Genomics">
        <title>Genome-wide and expression analysis of protein phosphatase 2C in rice and Arabidopsis.</title>
        <authorList>
            <person name="Xue T."/>
            <person name="Wang D."/>
            <person name="Zhang S."/>
            <person name="Ehlting J."/>
            <person name="Ni F."/>
            <person name="Jacab S."/>
            <person name="Zheng C."/>
            <person name="Zhong Y."/>
        </authorList>
    </citation>
    <scope>GENE FAMILY</scope>
    <scope>NOMENCLATURE</scope>
</reference>
<comment type="catalytic activity">
    <reaction>
        <text>O-phospho-L-seryl-[protein] + H2O = L-seryl-[protein] + phosphate</text>
        <dbReference type="Rhea" id="RHEA:20629"/>
        <dbReference type="Rhea" id="RHEA-COMP:9863"/>
        <dbReference type="Rhea" id="RHEA-COMP:11604"/>
        <dbReference type="ChEBI" id="CHEBI:15377"/>
        <dbReference type="ChEBI" id="CHEBI:29999"/>
        <dbReference type="ChEBI" id="CHEBI:43474"/>
        <dbReference type="ChEBI" id="CHEBI:83421"/>
        <dbReference type="EC" id="3.1.3.16"/>
    </reaction>
</comment>
<comment type="catalytic activity">
    <reaction>
        <text>O-phospho-L-threonyl-[protein] + H2O = L-threonyl-[protein] + phosphate</text>
        <dbReference type="Rhea" id="RHEA:47004"/>
        <dbReference type="Rhea" id="RHEA-COMP:11060"/>
        <dbReference type="Rhea" id="RHEA-COMP:11605"/>
        <dbReference type="ChEBI" id="CHEBI:15377"/>
        <dbReference type="ChEBI" id="CHEBI:30013"/>
        <dbReference type="ChEBI" id="CHEBI:43474"/>
        <dbReference type="ChEBI" id="CHEBI:61977"/>
        <dbReference type="EC" id="3.1.3.16"/>
    </reaction>
</comment>
<comment type="cofactor">
    <cofactor evidence="1">
        <name>Mg(2+)</name>
        <dbReference type="ChEBI" id="CHEBI:18420"/>
    </cofactor>
    <cofactor evidence="1">
        <name>Mn(2+)</name>
        <dbReference type="ChEBI" id="CHEBI:29035"/>
    </cofactor>
    <text evidence="1">Binds 2 magnesium or manganese ions per subunit.</text>
</comment>
<comment type="similarity">
    <text evidence="3">Belongs to the PP2C family.</text>
</comment>
<dbReference type="EC" id="3.1.3.16"/>
<dbReference type="EMBL" id="AC007627">
    <property type="status" value="NOT_ANNOTATED_CDS"/>
    <property type="molecule type" value="Genomic_DNA"/>
</dbReference>
<dbReference type="EMBL" id="CP002688">
    <property type="protein sequence ID" value="AED93745.1"/>
    <property type="molecule type" value="Genomic_DNA"/>
</dbReference>
<dbReference type="EMBL" id="CP002688">
    <property type="protein sequence ID" value="AED93746.1"/>
    <property type="molecule type" value="Genomic_DNA"/>
</dbReference>
<dbReference type="EMBL" id="AK118436">
    <property type="protein sequence ID" value="BAC43045.1"/>
    <property type="molecule type" value="mRNA"/>
</dbReference>
<dbReference type="EMBL" id="AK229967">
    <property type="protein sequence ID" value="BAF01792.1"/>
    <property type="molecule type" value="mRNA"/>
</dbReference>
<dbReference type="EMBL" id="AK228402">
    <property type="protein sequence ID" value="BAF00337.1"/>
    <property type="molecule type" value="mRNA"/>
</dbReference>
<dbReference type="EMBL" id="BT026463">
    <property type="protein sequence ID" value="ABH04570.1"/>
    <property type="molecule type" value="mRNA"/>
</dbReference>
<dbReference type="EMBL" id="AY086281">
    <property type="protein sequence ID" value="AAM64353.1"/>
    <property type="molecule type" value="mRNA"/>
</dbReference>
<dbReference type="EMBL" id="AB079668">
    <property type="protein sequence ID" value="BAB84697.1"/>
    <property type="molecule type" value="mRNA"/>
</dbReference>
<dbReference type="RefSeq" id="NP_568503.1">
    <property type="nucleotide sequence ID" value="NM_122675.4"/>
</dbReference>
<dbReference type="RefSeq" id="NP_851086.1">
    <property type="nucleotide sequence ID" value="NM_180755.2"/>
</dbReference>
<dbReference type="SMR" id="Q0WRB2"/>
<dbReference type="FunCoup" id="Q0WRB2">
    <property type="interactions" value="434"/>
</dbReference>
<dbReference type="STRING" id="3702.Q0WRB2"/>
<dbReference type="PaxDb" id="3702-AT5G27930.2"/>
<dbReference type="ProteomicsDB" id="250916"/>
<dbReference type="EnsemblPlants" id="AT5G27930.1">
    <property type="protein sequence ID" value="AT5G27930.1"/>
    <property type="gene ID" value="AT5G27930"/>
</dbReference>
<dbReference type="EnsemblPlants" id="AT5G27930.2">
    <property type="protein sequence ID" value="AT5G27930.2"/>
    <property type="gene ID" value="AT5G27930"/>
</dbReference>
<dbReference type="GeneID" id="832860"/>
<dbReference type="Gramene" id="AT5G27930.1">
    <property type="protein sequence ID" value="AT5G27930.1"/>
    <property type="gene ID" value="AT5G27930"/>
</dbReference>
<dbReference type="Gramene" id="AT5G27930.2">
    <property type="protein sequence ID" value="AT5G27930.2"/>
    <property type="gene ID" value="AT5G27930"/>
</dbReference>
<dbReference type="KEGG" id="ath:AT5G27930"/>
<dbReference type="Araport" id="AT5G27930"/>
<dbReference type="TAIR" id="AT5G27930">
    <property type="gene designation" value="EGR2"/>
</dbReference>
<dbReference type="eggNOG" id="KOG0698">
    <property type="taxonomic scope" value="Eukaryota"/>
</dbReference>
<dbReference type="HOGENOM" id="CLU_013173_6_0_1"/>
<dbReference type="InParanoid" id="Q0WRB2"/>
<dbReference type="OMA" id="HSYIKTC"/>
<dbReference type="PhylomeDB" id="Q0WRB2"/>
<dbReference type="PRO" id="PR:Q0WRB2"/>
<dbReference type="Proteomes" id="UP000006548">
    <property type="component" value="Chromosome 5"/>
</dbReference>
<dbReference type="ExpressionAtlas" id="Q0WRB2">
    <property type="expression patterns" value="baseline and differential"/>
</dbReference>
<dbReference type="GO" id="GO:0005886">
    <property type="term" value="C:plasma membrane"/>
    <property type="evidence" value="ECO:0000314"/>
    <property type="project" value="TAIR"/>
</dbReference>
<dbReference type="GO" id="GO:0046872">
    <property type="term" value="F:metal ion binding"/>
    <property type="evidence" value="ECO:0007669"/>
    <property type="project" value="UniProtKB-KW"/>
</dbReference>
<dbReference type="GO" id="GO:0004722">
    <property type="term" value="F:protein serine/threonine phosphatase activity"/>
    <property type="evidence" value="ECO:0007669"/>
    <property type="project" value="UniProtKB-EC"/>
</dbReference>
<dbReference type="GO" id="GO:0009819">
    <property type="term" value="P:drought recovery"/>
    <property type="evidence" value="ECO:0000315"/>
    <property type="project" value="TAIR"/>
</dbReference>
<dbReference type="GO" id="GO:0000226">
    <property type="term" value="P:microtubule cytoskeleton organization"/>
    <property type="evidence" value="ECO:0000315"/>
    <property type="project" value="TAIR"/>
</dbReference>
<dbReference type="GO" id="GO:0045926">
    <property type="term" value="P:negative regulation of growth"/>
    <property type="evidence" value="ECO:0000315"/>
    <property type="project" value="TAIR"/>
</dbReference>
<dbReference type="GO" id="GO:0006470">
    <property type="term" value="P:protein dephosphorylation"/>
    <property type="evidence" value="ECO:0000315"/>
    <property type="project" value="TAIR"/>
</dbReference>
<dbReference type="CDD" id="cd00143">
    <property type="entry name" value="PP2Cc"/>
    <property type="match status" value="1"/>
</dbReference>
<dbReference type="FunFam" id="3.60.40.10:FF:000038">
    <property type="entry name" value="Probable protein phosphatase 2C 34"/>
    <property type="match status" value="1"/>
</dbReference>
<dbReference type="Gene3D" id="3.60.40.10">
    <property type="entry name" value="PPM-type phosphatase domain"/>
    <property type="match status" value="1"/>
</dbReference>
<dbReference type="InterPro" id="IPR015655">
    <property type="entry name" value="PP2C"/>
</dbReference>
<dbReference type="InterPro" id="IPR036457">
    <property type="entry name" value="PPM-type-like_dom_sf"/>
</dbReference>
<dbReference type="InterPro" id="IPR001932">
    <property type="entry name" value="PPM-type_phosphatase-like_dom"/>
</dbReference>
<dbReference type="PANTHER" id="PTHR47992">
    <property type="entry name" value="PROTEIN PHOSPHATASE"/>
    <property type="match status" value="1"/>
</dbReference>
<dbReference type="Pfam" id="PF00481">
    <property type="entry name" value="PP2C"/>
    <property type="match status" value="1"/>
</dbReference>
<dbReference type="SMART" id="SM00332">
    <property type="entry name" value="PP2Cc"/>
    <property type="match status" value="1"/>
</dbReference>
<dbReference type="SUPFAM" id="SSF81606">
    <property type="entry name" value="PP2C-like"/>
    <property type="match status" value="1"/>
</dbReference>
<dbReference type="PROSITE" id="PS51746">
    <property type="entry name" value="PPM_2"/>
    <property type="match status" value="1"/>
</dbReference>
<evidence type="ECO:0000250" key="1"/>
<evidence type="ECO:0000255" key="2">
    <source>
        <dbReference type="PROSITE-ProRule" id="PRU01082"/>
    </source>
</evidence>
<evidence type="ECO:0000305" key="3"/>
<feature type="chain" id="PRO_0000367993" description="Probable protein phosphatase 2C 73">
    <location>
        <begin position="1"/>
        <end position="373"/>
    </location>
</feature>
<feature type="domain" description="PPM-type phosphatase" evidence="2">
    <location>
        <begin position="61"/>
        <end position="354"/>
    </location>
</feature>
<feature type="binding site" evidence="1">
    <location>
        <position position="97"/>
    </location>
    <ligand>
        <name>Mn(2+)</name>
        <dbReference type="ChEBI" id="CHEBI:29035"/>
        <label>1</label>
    </ligand>
</feature>
<feature type="binding site" evidence="1">
    <location>
        <position position="97"/>
    </location>
    <ligand>
        <name>Mn(2+)</name>
        <dbReference type="ChEBI" id="CHEBI:29035"/>
        <label>2</label>
    </ligand>
</feature>
<feature type="binding site" evidence="1">
    <location>
        <position position="98"/>
    </location>
    <ligand>
        <name>Mn(2+)</name>
        <dbReference type="ChEBI" id="CHEBI:29035"/>
        <label>1</label>
    </ligand>
</feature>
<feature type="binding site" evidence="1">
    <location>
        <position position="299"/>
    </location>
    <ligand>
        <name>Mn(2+)</name>
        <dbReference type="ChEBI" id="CHEBI:29035"/>
        <label>2</label>
    </ligand>
</feature>
<feature type="binding site" evidence="1">
    <location>
        <position position="345"/>
    </location>
    <ligand>
        <name>Mn(2+)</name>
        <dbReference type="ChEBI" id="CHEBI:29035"/>
        <label>2</label>
    </ligand>
</feature>
<feature type="sequence conflict" description="In Ref. 3; BAC43045." evidence="3" ref="3">
    <original>Q</original>
    <variation>H</variation>
    <location>
        <position position="56"/>
    </location>
</feature>
<feature type="sequence conflict" description="In Ref. 3; BAC43045." evidence="3" ref="3">
    <original>I</original>
    <variation>V</variation>
    <location>
        <position position="144"/>
    </location>
</feature>
<feature type="sequence conflict" description="In Ref. 7; BAB84697." evidence="3" ref="7">
    <original>D</original>
    <variation>N</variation>
    <location>
        <position position="242"/>
    </location>
</feature>
<feature type="sequence conflict" description="In Ref. 6; AAM64353." evidence="3" ref="6">
    <original>V</original>
    <variation>L</variation>
    <location>
        <position position="328"/>
    </location>
</feature>
<organism>
    <name type="scientific">Arabidopsis thaliana</name>
    <name type="common">Mouse-ear cress</name>
    <dbReference type="NCBI Taxonomy" id="3702"/>
    <lineage>
        <taxon>Eukaryota</taxon>
        <taxon>Viridiplantae</taxon>
        <taxon>Streptophyta</taxon>
        <taxon>Embryophyta</taxon>
        <taxon>Tracheophyta</taxon>
        <taxon>Spermatophyta</taxon>
        <taxon>Magnoliopsida</taxon>
        <taxon>eudicotyledons</taxon>
        <taxon>Gunneridae</taxon>
        <taxon>Pentapetalae</taxon>
        <taxon>rosids</taxon>
        <taxon>malvids</taxon>
        <taxon>Brassicales</taxon>
        <taxon>Brassicaceae</taxon>
        <taxon>Camelineae</taxon>
        <taxon>Arabidopsis</taxon>
    </lineage>
</organism>
<keyword id="KW-0378">Hydrolase</keyword>
<keyword id="KW-0460">Magnesium</keyword>
<keyword id="KW-0464">Manganese</keyword>
<keyword id="KW-0479">Metal-binding</keyword>
<keyword id="KW-0904">Protein phosphatase</keyword>
<keyword id="KW-1185">Reference proteome</keyword>
<protein>
    <recommendedName>
        <fullName>Probable protein phosphatase 2C 73</fullName>
        <shortName>AtPP2C73</shortName>
        <ecNumber>3.1.3.16</ecNumber>
    </recommendedName>
    <alternativeName>
        <fullName>AtPPC6;7</fullName>
    </alternativeName>
</protein>
<accession>Q0WRB2</accession>
<accession>Q0WM64</accession>
<accession>Q8GX49</accession>
<accession>Q8LD08</accession>
<accession>Q8SBC4</accession>
<sequence>MGHFSSMFNGLARSFSIKKVKNNNGNCDAKEAADEMASEAKKKELILKSSGYVNVQGSNNLASLFSKRGEKGVNQDCALVWEGFGCQEDMIFCGIFDGHGPWGHYVAKQVRNSMPLSLLCNWQKILAQATLEPELDLEGSNKKISRFDIWKQSYLKTCATVDQELEHHRKIDSYYSGTTALTIVRQGEVIYVANVGDSRAVLAMESDEGSLVAVQLTLDFKPNLPQEKERIIGCKGRVFCLDDEPGVHRVWQPDAETPGLAMSRAFGDYCIKEYGLVSVPEVTQRHISTKDHFIILASDGIWDVISNQEAIEIVSSTAERPKAAKRLVEQAVRAWKKKRRGYSMDDMSVVCLFLHSSSSSSLSQHHHAMTILK</sequence>
<proteinExistence type="evidence at transcript level"/>